<gene>
    <name type="primary">mtmB2</name>
    <name type="ordered locus">Mbar_A0846</name>
</gene>
<sequence>MTFRKSFDCYDFYDRAKVGEKCTQDDWDLMKIPMKAMELKQKYGLDFKGEFIPTDKDMMEKLFKAGFEMLLECGIYCTDTHRIVKYTEDEIWDAINNVQKEFVLGTGRDAVNVKKRSVGDKAKPIVQGGPTGSPISEDVFMPVHMSYALEKEVDTIVNGVMTSVRGKAPVPKSPYEVLAAKTETRLIKNACAMAGRPGMGVOGPETSLSAQGNISADCAGGMTCTDSHEVSQLNELKIDLDAISVIAHYKGNSDIIMDEQMPIFGGYAGGIEETTIVDVATHINAVIMSSASWHLDGPVHIRWGSTNTRETLTIAGWACATISEFTDILSGNQYYPCAGPCTEMCLLEASAQSITDTASGREILSGVASAKGVVTDKTTGMEARMMGEVARATAGVEISEVNVILDKLVALYEKNYASAPAGKTFQECYDVKTVTPTEEYMQVYDGARKKLEDLGLVF</sequence>
<organism>
    <name type="scientific">Methanosarcina barkeri (strain Fusaro / DSM 804)</name>
    <dbReference type="NCBI Taxonomy" id="269797"/>
    <lineage>
        <taxon>Archaea</taxon>
        <taxon>Methanobacteriati</taxon>
        <taxon>Methanobacteriota</taxon>
        <taxon>Stenosarchaea group</taxon>
        <taxon>Methanomicrobia</taxon>
        <taxon>Methanosarcinales</taxon>
        <taxon>Methanosarcinaceae</taxon>
        <taxon>Methanosarcina</taxon>
    </lineage>
</organism>
<name>MTMB2_METBF</name>
<reference key="1">
    <citation type="journal article" date="2006" name="J. Bacteriol.">
        <title>The Methanosarcina barkeri genome: comparative analysis with Methanosarcina acetivorans and Methanosarcina mazei reveals extensive rearrangement within methanosarcinal genomes.</title>
        <authorList>
            <person name="Maeder D.L."/>
            <person name="Anderson I."/>
            <person name="Brettin T.S."/>
            <person name="Bruce D.C."/>
            <person name="Gilna P."/>
            <person name="Han C.S."/>
            <person name="Lapidus A."/>
            <person name="Metcalf W.W."/>
            <person name="Saunders E."/>
            <person name="Tapia R."/>
            <person name="Sowers K.R."/>
        </authorList>
    </citation>
    <scope>NUCLEOTIDE SEQUENCE [LARGE SCALE GENOMIC DNA]</scope>
    <source>
        <strain>Fusaro / DSM 804</strain>
    </source>
</reference>
<proteinExistence type="inferred from homology"/>
<keyword id="KW-0484">Methanogenesis</keyword>
<keyword id="KW-0489">Methyltransferase</keyword>
<keyword id="KW-0669">Pyrrolysine</keyword>
<keyword id="KW-0808">Transferase</keyword>
<dbReference type="EC" id="2.1.1.248"/>
<dbReference type="EMBL" id="CP000099">
    <property type="protein sequence ID" value="ABF82161.3"/>
    <property type="molecule type" value="Genomic_DNA"/>
</dbReference>
<dbReference type="KEGG" id="mba:Mbar_A0846"/>
<dbReference type="HOGENOM" id="CLU_047925_0_0_2"/>
<dbReference type="UniPathway" id="UPA00643"/>
<dbReference type="GO" id="GO:0043852">
    <property type="term" value="F:monomethylamine methyltransferase activity"/>
    <property type="evidence" value="ECO:0007669"/>
    <property type="project" value="UniProtKB-EC"/>
</dbReference>
<dbReference type="GO" id="GO:0015948">
    <property type="term" value="P:methanogenesis"/>
    <property type="evidence" value="ECO:0007669"/>
    <property type="project" value="UniProtKB-KW"/>
</dbReference>
<dbReference type="GO" id="GO:0032259">
    <property type="term" value="P:methylation"/>
    <property type="evidence" value="ECO:0007669"/>
    <property type="project" value="UniProtKB-KW"/>
</dbReference>
<dbReference type="FunFam" id="3.20.20.460:FF:000001">
    <property type="entry name" value="Monomethylamine methyltransferase MtmB1"/>
    <property type="match status" value="1"/>
</dbReference>
<dbReference type="Gene3D" id="3.20.20.460">
    <property type="entry name" value="Monomethylamine methyltransferase MtmB"/>
    <property type="match status" value="1"/>
</dbReference>
<dbReference type="InterPro" id="IPR008031">
    <property type="entry name" value="MtmB_MeTrfase"/>
</dbReference>
<dbReference type="InterPro" id="IPR036655">
    <property type="entry name" value="MtmB_sf"/>
</dbReference>
<dbReference type="Pfam" id="PF05369">
    <property type="entry name" value="MtmB"/>
    <property type="match status" value="1"/>
</dbReference>
<dbReference type="SUPFAM" id="SSF75098">
    <property type="entry name" value="Monomethylamine methyltransferase MtmB"/>
    <property type="match status" value="1"/>
</dbReference>
<comment type="function">
    <text evidence="1">Catalyzes the transfer of the methyl group from monomethylamine to the corrinoid cofactor of MtmC.</text>
</comment>
<comment type="catalytic activity">
    <reaction>
        <text>Co(I)-[methylamine-specific corrinoid protein] + methylamine + H(+) = methyl-Co(III)-[methylamine-specific corrinoid protein] + NH4(+)</text>
        <dbReference type="Rhea" id="RHEA:26059"/>
        <dbReference type="Rhea" id="RHEA-COMP:11120"/>
        <dbReference type="Rhea" id="RHEA-COMP:11121"/>
        <dbReference type="ChEBI" id="CHEBI:15378"/>
        <dbReference type="ChEBI" id="CHEBI:28938"/>
        <dbReference type="ChEBI" id="CHEBI:59338"/>
        <dbReference type="ChEBI" id="CHEBI:85033"/>
        <dbReference type="ChEBI" id="CHEBI:85035"/>
        <dbReference type="EC" id="2.1.1.248"/>
    </reaction>
</comment>
<comment type="pathway">
    <text>One-carbon metabolism; methanogenesis from methylamine.</text>
</comment>
<comment type="similarity">
    <text evidence="2">Belongs to the monomethylamine methyltransferase family.</text>
</comment>
<evidence type="ECO:0000250" key="1"/>
<evidence type="ECO:0000305" key="2"/>
<accession>P0C0W3</accession>
<accession>Q1DGD7</accession>
<feature type="initiator methionine" description="Removed" evidence="1">
    <location>
        <position position="1"/>
    </location>
</feature>
<feature type="chain" id="PRO_0000216553" description="Monomethylamine methyltransferase MtmB2">
    <location>
        <begin position="2"/>
        <end position="458"/>
    </location>
</feature>
<feature type="non-standard amino acid" description="Pyrrolysine" evidence="1">
    <location>
        <position position="202"/>
    </location>
</feature>
<protein>
    <recommendedName>
        <fullName>Monomethylamine methyltransferase MtmB2</fullName>
        <shortName>MMA methyltransferase 2</shortName>
        <shortName>MMAMT 2</shortName>
        <ecNumber>2.1.1.248</ecNumber>
    </recommendedName>
</protein>